<organism>
    <name type="scientific">Shigella dysenteriae serotype 1 (strain Sd197)</name>
    <dbReference type="NCBI Taxonomy" id="300267"/>
    <lineage>
        <taxon>Bacteria</taxon>
        <taxon>Pseudomonadati</taxon>
        <taxon>Pseudomonadota</taxon>
        <taxon>Gammaproteobacteria</taxon>
        <taxon>Enterobacterales</taxon>
        <taxon>Enterobacteriaceae</taxon>
        <taxon>Shigella</taxon>
    </lineage>
</organism>
<protein>
    <recommendedName>
        <fullName evidence="1">Endonuclease V</fullName>
        <ecNumber evidence="1">3.1.21.7</ecNumber>
    </recommendedName>
    <alternativeName>
        <fullName evidence="1">Deoxyinosine 3'endonuclease</fullName>
    </alternativeName>
    <alternativeName>
        <fullName evidence="1">Deoxyribonuclease V</fullName>
        <shortName evidence="1">DNase V</shortName>
    </alternativeName>
</protein>
<reference key="1">
    <citation type="journal article" date="2005" name="Nucleic Acids Res.">
        <title>Genome dynamics and diversity of Shigella species, the etiologic agents of bacillary dysentery.</title>
        <authorList>
            <person name="Yang F."/>
            <person name="Yang J."/>
            <person name="Zhang X."/>
            <person name="Chen L."/>
            <person name="Jiang Y."/>
            <person name="Yan Y."/>
            <person name="Tang X."/>
            <person name="Wang J."/>
            <person name="Xiong Z."/>
            <person name="Dong J."/>
            <person name="Xue Y."/>
            <person name="Zhu Y."/>
            <person name="Xu X."/>
            <person name="Sun L."/>
            <person name="Chen S."/>
            <person name="Nie H."/>
            <person name="Peng J."/>
            <person name="Xu J."/>
            <person name="Wang Y."/>
            <person name="Yuan Z."/>
            <person name="Wen Y."/>
            <person name="Yao Z."/>
            <person name="Shen Y."/>
            <person name="Qiang B."/>
            <person name="Hou Y."/>
            <person name="Yu J."/>
            <person name="Jin Q."/>
        </authorList>
    </citation>
    <scope>NUCLEOTIDE SEQUENCE [LARGE SCALE GENOMIC DNA]</scope>
    <source>
        <strain>Sd197</strain>
    </source>
</reference>
<comment type="function">
    <text evidence="1">DNA repair enzyme involved in the repair of deaminated bases. Selectively cleaves double-stranded DNA at the second phosphodiester bond 3' to a deoxyinosine leaving behind the intact lesion on the nicked DNA.</text>
</comment>
<comment type="catalytic activity">
    <reaction evidence="1">
        <text>Endonucleolytic cleavage at apurinic or apyrimidinic sites to products with a 5'-phosphate.</text>
        <dbReference type="EC" id="3.1.21.7"/>
    </reaction>
</comment>
<comment type="cofactor">
    <cofactor evidence="1">
        <name>Mg(2+)</name>
        <dbReference type="ChEBI" id="CHEBI:18420"/>
    </cofactor>
</comment>
<comment type="subcellular location">
    <subcellularLocation>
        <location evidence="1">Cytoplasm</location>
    </subcellularLocation>
</comment>
<comment type="similarity">
    <text evidence="1">Belongs to the endonuclease V family.</text>
</comment>
<evidence type="ECO:0000255" key="1">
    <source>
        <dbReference type="HAMAP-Rule" id="MF_00801"/>
    </source>
</evidence>
<name>NFI_SHIDS</name>
<accession>Q32AH1</accession>
<sequence>MDLASLRAQQIELASSVIREDRLDKDPPDLIAGADVGFEQGGEVTRAAMVLLKYPSLELVEYKVARIATTMPYIPGFLSFREYPALLAAWEMLSQKPDLVFVDGHGISHPRRLGVASHFGLLVDVPTIGVAKKRLCGKFEPLPSEPGALAPLMDKGEQLAWVWRSKARCNPLFIATGHRVSVDSALAWVQRCMKGYRLPEPTRWADAVASERPAFVSYTANQP</sequence>
<gene>
    <name evidence="1" type="primary">nfi</name>
    <name type="ordered locus">SDY_3728</name>
</gene>
<proteinExistence type="inferred from homology"/>
<keyword id="KW-0963">Cytoplasm</keyword>
<keyword id="KW-0227">DNA damage</keyword>
<keyword id="KW-0234">DNA repair</keyword>
<keyword id="KW-0255">Endonuclease</keyword>
<keyword id="KW-0378">Hydrolase</keyword>
<keyword id="KW-0460">Magnesium</keyword>
<keyword id="KW-0479">Metal-binding</keyword>
<keyword id="KW-0540">Nuclease</keyword>
<keyword id="KW-1185">Reference proteome</keyword>
<dbReference type="EC" id="3.1.21.7" evidence="1"/>
<dbReference type="EMBL" id="CP000034">
    <property type="protein sequence ID" value="ABB63684.1"/>
    <property type="molecule type" value="Genomic_DNA"/>
</dbReference>
<dbReference type="RefSeq" id="WP_000362382.1">
    <property type="nucleotide sequence ID" value="NC_007606.1"/>
</dbReference>
<dbReference type="RefSeq" id="YP_405175.1">
    <property type="nucleotide sequence ID" value="NC_007606.1"/>
</dbReference>
<dbReference type="SMR" id="Q32AH1"/>
<dbReference type="STRING" id="300267.SDY_3728"/>
<dbReference type="EnsemblBacteria" id="ABB63684">
    <property type="protein sequence ID" value="ABB63684"/>
    <property type="gene ID" value="SDY_3728"/>
</dbReference>
<dbReference type="KEGG" id="sdy:SDY_3728"/>
<dbReference type="PATRIC" id="fig|300267.13.peg.4420"/>
<dbReference type="HOGENOM" id="CLU_047631_1_0_6"/>
<dbReference type="Proteomes" id="UP000002716">
    <property type="component" value="Chromosome"/>
</dbReference>
<dbReference type="GO" id="GO:0005737">
    <property type="term" value="C:cytoplasm"/>
    <property type="evidence" value="ECO:0007669"/>
    <property type="project" value="UniProtKB-SubCell"/>
</dbReference>
<dbReference type="GO" id="GO:0043737">
    <property type="term" value="F:deoxyribonuclease V activity"/>
    <property type="evidence" value="ECO:0007669"/>
    <property type="project" value="UniProtKB-UniRule"/>
</dbReference>
<dbReference type="GO" id="GO:0000287">
    <property type="term" value="F:magnesium ion binding"/>
    <property type="evidence" value="ECO:0007669"/>
    <property type="project" value="UniProtKB-UniRule"/>
</dbReference>
<dbReference type="GO" id="GO:0016891">
    <property type="term" value="F:RNA endonuclease activity, producing 5'-phosphomonoesters"/>
    <property type="evidence" value="ECO:0007669"/>
    <property type="project" value="TreeGrafter"/>
</dbReference>
<dbReference type="GO" id="GO:0003727">
    <property type="term" value="F:single-stranded RNA binding"/>
    <property type="evidence" value="ECO:0007669"/>
    <property type="project" value="TreeGrafter"/>
</dbReference>
<dbReference type="GO" id="GO:0006281">
    <property type="term" value="P:DNA repair"/>
    <property type="evidence" value="ECO:0007669"/>
    <property type="project" value="UniProtKB-UniRule"/>
</dbReference>
<dbReference type="CDD" id="cd06559">
    <property type="entry name" value="Endonuclease_V"/>
    <property type="match status" value="1"/>
</dbReference>
<dbReference type="FunFam" id="3.30.2170.10:FF:000001">
    <property type="entry name" value="Endonuclease V"/>
    <property type="match status" value="1"/>
</dbReference>
<dbReference type="Gene3D" id="3.30.2170.10">
    <property type="entry name" value="archaeoglobus fulgidus dsm 4304 superfamily"/>
    <property type="match status" value="1"/>
</dbReference>
<dbReference type="HAMAP" id="MF_00801">
    <property type="entry name" value="Endonuclease_5"/>
    <property type="match status" value="1"/>
</dbReference>
<dbReference type="InterPro" id="IPR007581">
    <property type="entry name" value="Endonuclease-V"/>
</dbReference>
<dbReference type="NCBIfam" id="NF008629">
    <property type="entry name" value="PRK11617.1"/>
    <property type="match status" value="1"/>
</dbReference>
<dbReference type="PANTHER" id="PTHR28511">
    <property type="entry name" value="ENDONUCLEASE V"/>
    <property type="match status" value="1"/>
</dbReference>
<dbReference type="PANTHER" id="PTHR28511:SF1">
    <property type="entry name" value="ENDONUCLEASE V"/>
    <property type="match status" value="1"/>
</dbReference>
<dbReference type="Pfam" id="PF04493">
    <property type="entry name" value="Endonuclease_5"/>
    <property type="match status" value="1"/>
</dbReference>
<feature type="chain" id="PRO_1000047001" description="Endonuclease V">
    <location>
        <begin position="1"/>
        <end position="223"/>
    </location>
</feature>
<feature type="binding site" evidence="1">
    <location>
        <position position="35"/>
    </location>
    <ligand>
        <name>Mg(2+)</name>
        <dbReference type="ChEBI" id="CHEBI:18420"/>
    </ligand>
</feature>
<feature type="binding site" evidence="1">
    <location>
        <position position="103"/>
    </location>
    <ligand>
        <name>Mg(2+)</name>
        <dbReference type="ChEBI" id="CHEBI:18420"/>
    </ligand>
</feature>
<feature type="site" description="Interaction with target DNA" evidence="1">
    <location>
        <position position="73"/>
    </location>
</feature>